<feature type="signal peptide" evidence="1">
    <location>
        <begin position="1"/>
        <end position="27"/>
    </location>
</feature>
<feature type="chain" id="PRO_0000003925" description="Protocadherin beta-6">
    <location>
        <begin position="28"/>
        <end position="794"/>
    </location>
</feature>
<feature type="topological domain" description="Extracellular" evidence="1">
    <location>
        <begin position="28"/>
        <end position="688"/>
    </location>
</feature>
<feature type="transmembrane region" description="Helical" evidence="3">
    <location>
        <begin position="689"/>
        <end position="709"/>
    </location>
</feature>
<feature type="topological domain" description="Cytoplasmic" evidence="1">
    <location>
        <begin position="710"/>
        <end position="794"/>
    </location>
</feature>
<feature type="domain" description="Cadherin 1" evidence="4">
    <location>
        <begin position="34"/>
        <end position="132"/>
    </location>
</feature>
<feature type="domain" description="Cadherin 2" evidence="4">
    <location>
        <begin position="137"/>
        <end position="241"/>
    </location>
</feature>
<feature type="domain" description="Cadherin 3" evidence="4">
    <location>
        <begin position="246"/>
        <end position="345"/>
    </location>
</feature>
<feature type="domain" description="Cadherin 4" evidence="4">
    <location>
        <begin position="350"/>
        <end position="449"/>
    </location>
</feature>
<feature type="domain" description="Cadherin 5" evidence="4">
    <location>
        <begin position="454"/>
        <end position="559"/>
    </location>
</feature>
<feature type="domain" description="Cadherin 6" evidence="4">
    <location>
        <begin position="566"/>
        <end position="669"/>
    </location>
</feature>
<feature type="region of interest" description="Disordered" evidence="5">
    <location>
        <begin position="773"/>
        <end position="794"/>
    </location>
</feature>
<feature type="compositionally biased region" description="Polar residues" evidence="5">
    <location>
        <begin position="784"/>
        <end position="794"/>
    </location>
</feature>
<feature type="glycosylation site" description="N-linked (GlcNAc...) asparagine" evidence="3">
    <location>
        <position position="46"/>
    </location>
</feature>
<feature type="glycosylation site" description="N-linked (GlcNAc...) asparagine" evidence="3">
    <location>
        <position position="183"/>
    </location>
</feature>
<feature type="glycosylation site" description="N-linked (GlcNAc...) asparagine" evidence="3">
    <location>
        <position position="416"/>
    </location>
</feature>
<feature type="glycosylation site" description="N-linked (GlcNAc...) asparagine" evidence="3">
    <location>
        <position position="565"/>
    </location>
</feature>
<feature type="disulfide bond" evidence="1">
    <location>
        <begin position="95"/>
        <end position="101"/>
    </location>
</feature>
<keyword id="KW-0106">Calcium</keyword>
<keyword id="KW-0130">Cell adhesion</keyword>
<keyword id="KW-1003">Cell membrane</keyword>
<keyword id="KW-1015">Disulfide bond</keyword>
<keyword id="KW-0325">Glycoprotein</keyword>
<keyword id="KW-0472">Membrane</keyword>
<keyword id="KW-0479">Metal-binding</keyword>
<keyword id="KW-1185">Reference proteome</keyword>
<keyword id="KW-0677">Repeat</keyword>
<keyword id="KW-0732">Signal</keyword>
<keyword id="KW-0812">Transmembrane</keyword>
<keyword id="KW-1133">Transmembrane helix</keyword>
<dbReference type="RefSeq" id="NP_001013027.3">
    <property type="nucleotide sequence ID" value="NM_001013009.5"/>
</dbReference>
<dbReference type="SMR" id="Q5DRC8"/>
<dbReference type="FunCoup" id="Q5DRC8">
    <property type="interactions" value="111"/>
</dbReference>
<dbReference type="STRING" id="9598.ENSPTRP00000029635"/>
<dbReference type="GlyCosmos" id="Q5DRC8">
    <property type="glycosylation" value="4 sites, No reported glycans"/>
</dbReference>
<dbReference type="PaxDb" id="9598-ENSPTRP00000029635"/>
<dbReference type="Ensembl" id="ENSPTRT00000032075.4">
    <property type="protein sequence ID" value="ENSPTRP00000029635.3"/>
    <property type="gene ID" value="ENSPTRG00000017335.4"/>
</dbReference>
<dbReference type="GeneID" id="462130"/>
<dbReference type="KEGG" id="ptr:462130"/>
<dbReference type="CTD" id="56130"/>
<dbReference type="eggNOG" id="KOG3594">
    <property type="taxonomic scope" value="Eukaryota"/>
</dbReference>
<dbReference type="GeneTree" id="ENSGT00940000163433"/>
<dbReference type="HOGENOM" id="CLU_006480_3_0_1"/>
<dbReference type="InParanoid" id="Q5DRC8"/>
<dbReference type="OMA" id="GREMEEN"/>
<dbReference type="TreeFam" id="TF332299"/>
<dbReference type="Proteomes" id="UP000002277">
    <property type="component" value="Chromosome 5"/>
</dbReference>
<dbReference type="Bgee" id="ENSPTRG00000017335">
    <property type="expression patterns" value="Expressed in dorsolateral prefrontal cortex and 14 other cell types or tissues"/>
</dbReference>
<dbReference type="GO" id="GO:0005886">
    <property type="term" value="C:plasma membrane"/>
    <property type="evidence" value="ECO:0000250"/>
    <property type="project" value="UniProtKB"/>
</dbReference>
<dbReference type="GO" id="GO:0005509">
    <property type="term" value="F:calcium ion binding"/>
    <property type="evidence" value="ECO:0000250"/>
    <property type="project" value="UniProtKB"/>
</dbReference>
<dbReference type="GO" id="GO:0042802">
    <property type="term" value="F:identical protein binding"/>
    <property type="evidence" value="ECO:0000250"/>
    <property type="project" value="UniProtKB"/>
</dbReference>
<dbReference type="GO" id="GO:0007155">
    <property type="term" value="P:cell adhesion"/>
    <property type="evidence" value="ECO:0000318"/>
    <property type="project" value="GO_Central"/>
</dbReference>
<dbReference type="GO" id="GO:0009988">
    <property type="term" value="P:cell-cell recognition"/>
    <property type="evidence" value="ECO:0000250"/>
    <property type="project" value="UniProtKB"/>
</dbReference>
<dbReference type="GO" id="GO:0007156">
    <property type="term" value="P:homophilic cell adhesion via plasma membrane adhesion molecules"/>
    <property type="evidence" value="ECO:0000250"/>
    <property type="project" value="UniProtKB"/>
</dbReference>
<dbReference type="GO" id="GO:0007399">
    <property type="term" value="P:nervous system development"/>
    <property type="evidence" value="ECO:0007669"/>
    <property type="project" value="UniProtKB-ARBA"/>
</dbReference>
<dbReference type="CDD" id="cd11304">
    <property type="entry name" value="Cadherin_repeat"/>
    <property type="match status" value="5"/>
</dbReference>
<dbReference type="FunFam" id="2.60.40.60:FF:000001">
    <property type="entry name" value="Protocadherin alpha 2"/>
    <property type="match status" value="1"/>
</dbReference>
<dbReference type="FunFam" id="2.60.40.60:FF:000002">
    <property type="entry name" value="Protocadherin alpha 2"/>
    <property type="match status" value="1"/>
</dbReference>
<dbReference type="FunFam" id="2.60.40.60:FF:000006">
    <property type="entry name" value="Protocadherin alpha 2"/>
    <property type="match status" value="1"/>
</dbReference>
<dbReference type="FunFam" id="2.60.40.60:FF:000046">
    <property type="entry name" value="Protocadherin beta 5"/>
    <property type="match status" value="1"/>
</dbReference>
<dbReference type="FunFam" id="2.60.40.60:FF:000309">
    <property type="entry name" value="Protocadherin beta-8"/>
    <property type="match status" value="1"/>
</dbReference>
<dbReference type="FunFam" id="2.60.40.60:FF:000018">
    <property type="entry name" value="Protocadherin gamma c3"/>
    <property type="match status" value="1"/>
</dbReference>
<dbReference type="Gene3D" id="2.60.40.60">
    <property type="entry name" value="Cadherins"/>
    <property type="match status" value="6"/>
</dbReference>
<dbReference type="InterPro" id="IPR002126">
    <property type="entry name" value="Cadherin-like_dom"/>
</dbReference>
<dbReference type="InterPro" id="IPR015919">
    <property type="entry name" value="Cadherin-like_sf"/>
</dbReference>
<dbReference type="InterPro" id="IPR032455">
    <property type="entry name" value="Cadherin_C"/>
</dbReference>
<dbReference type="InterPro" id="IPR020894">
    <property type="entry name" value="Cadherin_CS"/>
</dbReference>
<dbReference type="InterPro" id="IPR013164">
    <property type="entry name" value="Cadherin_N"/>
</dbReference>
<dbReference type="InterPro" id="IPR050174">
    <property type="entry name" value="Protocadherin/Cadherin-CA"/>
</dbReference>
<dbReference type="PANTHER" id="PTHR24028">
    <property type="entry name" value="CADHERIN-87A"/>
    <property type="match status" value="1"/>
</dbReference>
<dbReference type="PANTHER" id="PTHR24028:SF104">
    <property type="entry name" value="PROTOCADHERIN BETA-6"/>
    <property type="match status" value="1"/>
</dbReference>
<dbReference type="Pfam" id="PF00028">
    <property type="entry name" value="Cadherin"/>
    <property type="match status" value="5"/>
</dbReference>
<dbReference type="Pfam" id="PF08266">
    <property type="entry name" value="Cadherin_2"/>
    <property type="match status" value="1"/>
</dbReference>
<dbReference type="Pfam" id="PF16492">
    <property type="entry name" value="Cadherin_C_2"/>
    <property type="match status" value="1"/>
</dbReference>
<dbReference type="PRINTS" id="PR00205">
    <property type="entry name" value="CADHERIN"/>
</dbReference>
<dbReference type="SMART" id="SM00112">
    <property type="entry name" value="CA"/>
    <property type="match status" value="6"/>
</dbReference>
<dbReference type="SUPFAM" id="SSF49313">
    <property type="entry name" value="Cadherin-like"/>
    <property type="match status" value="6"/>
</dbReference>
<dbReference type="PROSITE" id="PS00232">
    <property type="entry name" value="CADHERIN_1"/>
    <property type="match status" value="5"/>
</dbReference>
<dbReference type="PROSITE" id="PS50268">
    <property type="entry name" value="CADHERIN_2"/>
    <property type="match status" value="5"/>
</dbReference>
<protein>
    <recommendedName>
        <fullName evidence="6">Protocadherin beta-6</fullName>
        <shortName evidence="6">PCDH-beta-6</shortName>
    </recommendedName>
</protein>
<reference key="1">
    <citation type="journal article" date="2005" name="Nature">
        <title>Initial sequence of the chimpanzee genome and comparison with the human genome.</title>
        <authorList>
            <consortium name="Chimpanzee sequencing and analysis consortium"/>
        </authorList>
    </citation>
    <scope>NUCLEOTIDE SEQUENCE [LARGE SCALE GENOMIC DNA]</scope>
</reference>
<reference key="2">
    <citation type="journal article" date="2005" name="Genetics">
        <title>Comparative genomics and diversifying selection of the clustered vertebrate protocadherin genes.</title>
        <authorList>
            <person name="Wu Q."/>
        </authorList>
    </citation>
    <scope>IDENTIFICATION</scope>
</reference>
<name>PCDB6_PANTR</name>
<comment type="function">
    <text evidence="1">Calcium-dependent cell-adhesion protein involved in cells self-recognition and non-self discrimination. Thereby, it is involved in the establishment and maintenance of specific neuronal connections in the brain.</text>
</comment>
<comment type="subunit">
    <text evidence="1">Forms homodimers in trans (molecules expressed by two different cells). Forms promiscuous heterodimers in cis (at the plasma membrane of the same cell) with other protocadherins.</text>
</comment>
<comment type="subcellular location">
    <subcellularLocation>
        <location evidence="1">Cell membrane</location>
        <topology evidence="1">Single-pass type I membrane protein</topology>
    </subcellularLocation>
</comment>
<comment type="domain">
    <text evidence="1">Cadherin 1 to cadherin 4 domains mediate homophilic trans-interaction, the interaction with an identical protocadherin expressed by a neighboring cell. This is a head-to-tail interaction, the cadherin 1 domain interacting with the cadherin 4 domain and the cadherin 2 domain interacting the cadherin 3 domain of the other protocadherin. The cadherin 6 domain mediates promiscuous interactions with protocadherins on the same cell membrane. Each cadherin domain binds three calcium ions.</text>
</comment>
<gene>
    <name evidence="2" type="primary">PCDHB6</name>
</gene>
<accession>Q5DRC8</accession>
<evidence type="ECO:0000250" key="1">
    <source>
        <dbReference type="UniProtKB" id="Q91XZ4"/>
    </source>
</evidence>
<evidence type="ECO:0000250" key="2">
    <source>
        <dbReference type="UniProtKB" id="Q9Y5E3"/>
    </source>
</evidence>
<evidence type="ECO:0000255" key="3"/>
<evidence type="ECO:0000255" key="4">
    <source>
        <dbReference type="PROSITE-ProRule" id="PRU00043"/>
    </source>
</evidence>
<evidence type="ECO:0000256" key="5">
    <source>
        <dbReference type="SAM" id="MobiDB-lite"/>
    </source>
</evidence>
<evidence type="ECO:0000305" key="6"/>
<organism>
    <name type="scientific">Pan troglodytes</name>
    <name type="common">Chimpanzee</name>
    <dbReference type="NCBI Taxonomy" id="9598"/>
    <lineage>
        <taxon>Eukaryota</taxon>
        <taxon>Metazoa</taxon>
        <taxon>Chordata</taxon>
        <taxon>Craniata</taxon>
        <taxon>Vertebrata</taxon>
        <taxon>Euteleostomi</taxon>
        <taxon>Mammalia</taxon>
        <taxon>Eutheria</taxon>
        <taxon>Euarchontoglires</taxon>
        <taxon>Primates</taxon>
        <taxon>Haplorrhini</taxon>
        <taxon>Catarrhini</taxon>
        <taxon>Hominidae</taxon>
        <taxon>Pan</taxon>
    </lineage>
</organism>
<sequence>MMQTKVQNKKRQVAFFILLMLWGEVGSESIQYSVLEETESGTFVANLTKDLGLRVGELASRGARVVFKGNRQHLQFDPQTHDLLLNEKLDREELCGSTELCVLPFQVLLENPLQFFQASLRVRDINDHAPEFPAREMLLKISEITMPGKIFPLKMAHDLDTGSNGLQRYTISSNPHFHVLTRNRSEGRKFPELVLDKPLDREEQPQLRLTLIALDGGSPPRSGTSEIQIQVLDINDNVPEFAEELYEAQVPENNPLGSLVITVSARDLDAGSFGKVSYALFQVDDVNQPFEINAITGEIRLRKALDFEEIQSYDLDVEATDGGGLSGKCSLLVRVLDVNDNAPELTMSFFISPIPENLPEIIVAVFSVSDADSGHNQQVICSIENNLPFLLRPTVENFYTLVTEGALDRESRAEYNITITVTDLGTPRLKTQQSITVQVSDVNDNAPAFTQTSYTLFVRENNSPALHIGSVSATDRDSGINAQVTYSLLPPQDPHLPLASLVSINADNGHLFALRSLDYEALQAFEFRVGATDRGSPALSSEALVRVLVLDANDNSPFVLYPLQNGSAPCTELVPRAAEPGYLVTKVVAVDGDSGQNAWLSYQLLKATELGLFGVWAHNGEVRTARLLSERDAAKHRLVVLVKDNGEPPRSATATLHVLLVDGFSQPYLPLPEAAPAPAQADLLTVYLVVALASVSSLFLFSVLLFVAVRLCRRSRAASVGRCSVPEGPFPEHLVDVNGTGTLSQSYQYKVCLTGGSETNEFKFLKPIMPNFPPQGTEREMEETPTSRNSFPFS</sequence>
<proteinExistence type="inferred from homology"/>